<organism>
    <name type="scientific">Bacillus subtilis (strain 168)</name>
    <dbReference type="NCBI Taxonomy" id="224308"/>
    <lineage>
        <taxon>Bacteria</taxon>
        <taxon>Bacillati</taxon>
        <taxon>Bacillota</taxon>
        <taxon>Bacilli</taxon>
        <taxon>Bacillales</taxon>
        <taxon>Bacillaceae</taxon>
        <taxon>Bacillus</taxon>
    </lineage>
</organism>
<comment type="function">
    <text evidence="1">Associates with the EF-Tu.GDP complex and induces the exchange of GDP to GTP. It remains bound to the aminoacyl-tRNA.EF-Tu.GTP complex up to the GTP hydrolysis stage on the ribosome (By similarity).</text>
</comment>
<comment type="subcellular location">
    <subcellularLocation>
        <location evidence="1">Cytoplasm</location>
    </subcellularLocation>
</comment>
<comment type="similarity">
    <text evidence="4">Belongs to the EF-Ts family.</text>
</comment>
<name>EFTS_BACSU</name>
<keyword id="KW-0963">Cytoplasm</keyword>
<keyword id="KW-0903">Direct protein sequencing</keyword>
<keyword id="KW-0251">Elongation factor</keyword>
<keyword id="KW-0597">Phosphoprotein</keyword>
<keyword id="KW-0648">Protein biosynthesis</keyword>
<keyword id="KW-1185">Reference proteome</keyword>
<accession>P80700</accession>
<accession>O31748</accession>
<proteinExistence type="evidence at protein level"/>
<reference key="1">
    <citation type="journal article" date="1997" name="Nature">
        <title>The complete genome sequence of the Gram-positive bacterium Bacillus subtilis.</title>
        <authorList>
            <person name="Kunst F."/>
            <person name="Ogasawara N."/>
            <person name="Moszer I."/>
            <person name="Albertini A.M."/>
            <person name="Alloni G."/>
            <person name="Azevedo V."/>
            <person name="Bertero M.G."/>
            <person name="Bessieres P."/>
            <person name="Bolotin A."/>
            <person name="Borchert S."/>
            <person name="Borriss R."/>
            <person name="Boursier L."/>
            <person name="Brans A."/>
            <person name="Braun M."/>
            <person name="Brignell S.C."/>
            <person name="Bron S."/>
            <person name="Brouillet S."/>
            <person name="Bruschi C.V."/>
            <person name="Caldwell B."/>
            <person name="Capuano V."/>
            <person name="Carter N.M."/>
            <person name="Choi S.-K."/>
            <person name="Codani J.-J."/>
            <person name="Connerton I.F."/>
            <person name="Cummings N.J."/>
            <person name="Daniel R.A."/>
            <person name="Denizot F."/>
            <person name="Devine K.M."/>
            <person name="Duesterhoeft A."/>
            <person name="Ehrlich S.D."/>
            <person name="Emmerson P.T."/>
            <person name="Entian K.-D."/>
            <person name="Errington J."/>
            <person name="Fabret C."/>
            <person name="Ferrari E."/>
            <person name="Foulger D."/>
            <person name="Fritz C."/>
            <person name="Fujita M."/>
            <person name="Fujita Y."/>
            <person name="Fuma S."/>
            <person name="Galizzi A."/>
            <person name="Galleron N."/>
            <person name="Ghim S.-Y."/>
            <person name="Glaser P."/>
            <person name="Goffeau A."/>
            <person name="Golightly E.J."/>
            <person name="Grandi G."/>
            <person name="Guiseppi G."/>
            <person name="Guy B.J."/>
            <person name="Haga K."/>
            <person name="Haiech J."/>
            <person name="Harwood C.R."/>
            <person name="Henaut A."/>
            <person name="Hilbert H."/>
            <person name="Holsappel S."/>
            <person name="Hosono S."/>
            <person name="Hullo M.-F."/>
            <person name="Itaya M."/>
            <person name="Jones L.-M."/>
            <person name="Joris B."/>
            <person name="Karamata D."/>
            <person name="Kasahara Y."/>
            <person name="Klaerr-Blanchard M."/>
            <person name="Klein C."/>
            <person name="Kobayashi Y."/>
            <person name="Koetter P."/>
            <person name="Koningstein G."/>
            <person name="Krogh S."/>
            <person name="Kumano M."/>
            <person name="Kurita K."/>
            <person name="Lapidus A."/>
            <person name="Lardinois S."/>
            <person name="Lauber J."/>
            <person name="Lazarevic V."/>
            <person name="Lee S.-M."/>
            <person name="Levine A."/>
            <person name="Liu H."/>
            <person name="Masuda S."/>
            <person name="Mauel C."/>
            <person name="Medigue C."/>
            <person name="Medina N."/>
            <person name="Mellado R.P."/>
            <person name="Mizuno M."/>
            <person name="Moestl D."/>
            <person name="Nakai S."/>
            <person name="Noback M."/>
            <person name="Noone D."/>
            <person name="O'Reilly M."/>
            <person name="Ogawa K."/>
            <person name="Ogiwara A."/>
            <person name="Oudega B."/>
            <person name="Park S.-H."/>
            <person name="Parro V."/>
            <person name="Pohl T.M."/>
            <person name="Portetelle D."/>
            <person name="Porwollik S."/>
            <person name="Prescott A.M."/>
            <person name="Presecan E."/>
            <person name="Pujic P."/>
            <person name="Purnelle B."/>
            <person name="Rapoport G."/>
            <person name="Rey M."/>
            <person name="Reynolds S."/>
            <person name="Rieger M."/>
            <person name="Rivolta C."/>
            <person name="Rocha E."/>
            <person name="Roche B."/>
            <person name="Rose M."/>
            <person name="Sadaie Y."/>
            <person name="Sato T."/>
            <person name="Scanlan E."/>
            <person name="Schleich S."/>
            <person name="Schroeter R."/>
            <person name="Scoffone F."/>
            <person name="Sekiguchi J."/>
            <person name="Sekowska A."/>
            <person name="Seror S.J."/>
            <person name="Serror P."/>
            <person name="Shin B.-S."/>
            <person name="Soldo B."/>
            <person name="Sorokin A."/>
            <person name="Tacconi E."/>
            <person name="Takagi T."/>
            <person name="Takahashi H."/>
            <person name="Takemaru K."/>
            <person name="Takeuchi M."/>
            <person name="Tamakoshi A."/>
            <person name="Tanaka T."/>
            <person name="Terpstra P."/>
            <person name="Tognoni A."/>
            <person name="Tosato V."/>
            <person name="Uchiyama S."/>
            <person name="Vandenbol M."/>
            <person name="Vannier F."/>
            <person name="Vassarotti A."/>
            <person name="Viari A."/>
            <person name="Wambutt R."/>
            <person name="Wedler E."/>
            <person name="Wedler H."/>
            <person name="Weitzenegger T."/>
            <person name="Winters P."/>
            <person name="Wipat A."/>
            <person name="Yamamoto H."/>
            <person name="Yamane K."/>
            <person name="Yasumoto K."/>
            <person name="Yata K."/>
            <person name="Yoshida K."/>
            <person name="Yoshikawa H.-F."/>
            <person name="Zumstein E."/>
            <person name="Yoshikawa H."/>
            <person name="Danchin A."/>
        </authorList>
    </citation>
    <scope>NUCLEOTIDE SEQUENCE [LARGE SCALE GENOMIC DNA]</scope>
    <source>
        <strain>168</strain>
    </source>
</reference>
<reference key="2">
    <citation type="journal article" date="1997" name="Microbiology">
        <title>Identification of vegetative proteins for a two-dimensional protein index of Bacillus subtilis.</title>
        <authorList>
            <person name="Schmid R."/>
            <person name="Bernhardt J."/>
            <person name="Antelmann H."/>
            <person name="Voelker U."/>
            <person name="Mach H."/>
            <person name="Voelker A."/>
            <person name="Hecker M."/>
        </authorList>
    </citation>
    <scope>PROTEIN SEQUENCE OF 2-24</scope>
    <source>
        <strain>168 / IS58</strain>
    </source>
</reference>
<reference key="3">
    <citation type="journal article" date="2007" name="Mol. Cell. Proteomics">
        <title>The serine/threonine/tyrosine phosphoproteome of the model bacterium Bacillus subtilis.</title>
        <authorList>
            <person name="Macek B."/>
            <person name="Mijakovic I."/>
            <person name="Olsen J.V."/>
            <person name="Gnad F."/>
            <person name="Kumar C."/>
            <person name="Jensen P.R."/>
            <person name="Mann M."/>
        </authorList>
    </citation>
    <scope>PHOSPHORYLATION [LARGE SCALE ANALYSIS] AT SER-149</scope>
    <scope>IDENTIFICATION BY MASS SPECTROMETRY</scope>
    <source>
        <strain>168</strain>
    </source>
</reference>
<protein>
    <recommendedName>
        <fullName>Elongation factor Ts</fullName>
        <shortName>EF-Ts</shortName>
    </recommendedName>
</protein>
<sequence length="293" mass="32354">MAITAQQVKELREKTGAGMMDCKKALTETDGDMDKAIDLLREKGIAKAAKKADRIAAEGSTLIKTDGNKGVILEVNSETDFVAKNEGFKELLNTLADHLLANTPADVEEAMGQKMENGSTVEEYITSAVAKIGEKITLRRFTVLTKDDSSAFGAYLHMGGRIGVLTVLNGTTDEETAKDIAMHVAAVNPRYISRDQVSEEETNHERQILTQQALQEGKPENIVAKMVEGRLNKFFEEICLLDQAFVKNPDEKVKQVIAAKNATVQTFVRYEVGEGIEKRQENFAEEVMNQVKK</sequence>
<evidence type="ECO:0000250" key="1"/>
<evidence type="ECO:0000269" key="2">
    <source>
    </source>
</evidence>
<evidence type="ECO:0000269" key="3">
    <source>
    </source>
</evidence>
<evidence type="ECO:0000305" key="4"/>
<feature type="initiator methionine" description="Removed" evidence="3">
    <location>
        <position position="1"/>
    </location>
</feature>
<feature type="chain" id="PRO_0000161077" description="Elongation factor Ts">
    <location>
        <begin position="2"/>
        <end position="293"/>
    </location>
</feature>
<feature type="region of interest" description="Involved in Mg(2+) ion dislocation from EF-Tu" evidence="1">
    <location>
        <begin position="79"/>
        <end position="82"/>
    </location>
</feature>
<feature type="modified residue" description="Phosphoserine" evidence="2">
    <location>
        <position position="149"/>
    </location>
</feature>
<gene>
    <name type="primary">tsf</name>
    <name type="ordered locus">BSU16500</name>
</gene>
<dbReference type="EMBL" id="AL009126">
    <property type="protein sequence ID" value="CAB13523.1"/>
    <property type="molecule type" value="Genomic_DNA"/>
</dbReference>
<dbReference type="PIR" id="B69727">
    <property type="entry name" value="B69727"/>
</dbReference>
<dbReference type="RefSeq" id="NP_389532.1">
    <property type="nucleotide sequence ID" value="NC_000964.3"/>
</dbReference>
<dbReference type="RefSeq" id="WP_003231929.1">
    <property type="nucleotide sequence ID" value="NZ_OZ025638.1"/>
</dbReference>
<dbReference type="SMR" id="P80700"/>
<dbReference type="DIP" id="DIP-58538N"/>
<dbReference type="FunCoup" id="P80700">
    <property type="interactions" value="702"/>
</dbReference>
<dbReference type="IntAct" id="P80700">
    <property type="interactions" value="2"/>
</dbReference>
<dbReference type="MINT" id="P80700"/>
<dbReference type="STRING" id="224308.BSU16500"/>
<dbReference type="iPTMnet" id="P80700"/>
<dbReference type="jPOST" id="P80700"/>
<dbReference type="PaxDb" id="224308-BSU16500"/>
<dbReference type="EnsemblBacteria" id="CAB13523">
    <property type="protein sequence ID" value="CAB13523"/>
    <property type="gene ID" value="BSU_16500"/>
</dbReference>
<dbReference type="GeneID" id="939601"/>
<dbReference type="KEGG" id="bsu:BSU16500"/>
<dbReference type="PATRIC" id="fig|224308.179.peg.1791"/>
<dbReference type="eggNOG" id="COG0264">
    <property type="taxonomic scope" value="Bacteria"/>
</dbReference>
<dbReference type="InParanoid" id="P80700"/>
<dbReference type="OrthoDB" id="9808348at2"/>
<dbReference type="PhylomeDB" id="P80700"/>
<dbReference type="BioCyc" id="BSUB:BSU16500-MONOMER"/>
<dbReference type="Proteomes" id="UP000001570">
    <property type="component" value="Chromosome"/>
</dbReference>
<dbReference type="GO" id="GO:0005737">
    <property type="term" value="C:cytoplasm"/>
    <property type="evidence" value="ECO:0007669"/>
    <property type="project" value="UniProtKB-SubCell"/>
</dbReference>
<dbReference type="GO" id="GO:0003746">
    <property type="term" value="F:translation elongation factor activity"/>
    <property type="evidence" value="ECO:0000318"/>
    <property type="project" value="GO_Central"/>
</dbReference>
<dbReference type="GO" id="GO:0006414">
    <property type="term" value="P:translational elongation"/>
    <property type="evidence" value="ECO:0000318"/>
    <property type="project" value="GO_Central"/>
</dbReference>
<dbReference type="CDD" id="cd14275">
    <property type="entry name" value="UBA_EF-Ts"/>
    <property type="match status" value="1"/>
</dbReference>
<dbReference type="FunFam" id="1.10.286.20:FF:000003">
    <property type="entry name" value="Elongation factor Ts"/>
    <property type="match status" value="1"/>
</dbReference>
<dbReference type="FunFam" id="1.10.8.10:FF:000001">
    <property type="entry name" value="Elongation factor Ts"/>
    <property type="match status" value="1"/>
</dbReference>
<dbReference type="Gene3D" id="1.10.286.20">
    <property type="match status" value="1"/>
</dbReference>
<dbReference type="Gene3D" id="1.10.8.10">
    <property type="entry name" value="DNA helicase RuvA subunit, C-terminal domain"/>
    <property type="match status" value="1"/>
</dbReference>
<dbReference type="Gene3D" id="3.30.479.20">
    <property type="entry name" value="Elongation factor Ts, dimerisation domain"/>
    <property type="match status" value="2"/>
</dbReference>
<dbReference type="HAMAP" id="MF_00050">
    <property type="entry name" value="EF_Ts"/>
    <property type="match status" value="1"/>
</dbReference>
<dbReference type="InterPro" id="IPR036402">
    <property type="entry name" value="EF-Ts_dimer_sf"/>
</dbReference>
<dbReference type="InterPro" id="IPR001816">
    <property type="entry name" value="Transl_elong_EFTs/EF1B"/>
</dbReference>
<dbReference type="InterPro" id="IPR014039">
    <property type="entry name" value="Transl_elong_EFTs/EF1B_dimer"/>
</dbReference>
<dbReference type="InterPro" id="IPR018101">
    <property type="entry name" value="Transl_elong_Ts_CS"/>
</dbReference>
<dbReference type="InterPro" id="IPR009060">
    <property type="entry name" value="UBA-like_sf"/>
</dbReference>
<dbReference type="NCBIfam" id="TIGR00116">
    <property type="entry name" value="tsf"/>
    <property type="match status" value="1"/>
</dbReference>
<dbReference type="PANTHER" id="PTHR11741">
    <property type="entry name" value="ELONGATION FACTOR TS"/>
    <property type="match status" value="1"/>
</dbReference>
<dbReference type="PANTHER" id="PTHR11741:SF0">
    <property type="entry name" value="ELONGATION FACTOR TS, MITOCHONDRIAL"/>
    <property type="match status" value="1"/>
</dbReference>
<dbReference type="Pfam" id="PF00889">
    <property type="entry name" value="EF_TS"/>
    <property type="match status" value="1"/>
</dbReference>
<dbReference type="SUPFAM" id="SSF54713">
    <property type="entry name" value="Elongation factor Ts (EF-Ts), dimerisation domain"/>
    <property type="match status" value="2"/>
</dbReference>
<dbReference type="SUPFAM" id="SSF46934">
    <property type="entry name" value="UBA-like"/>
    <property type="match status" value="1"/>
</dbReference>
<dbReference type="PROSITE" id="PS01126">
    <property type="entry name" value="EF_TS_1"/>
    <property type="match status" value="1"/>
</dbReference>
<dbReference type="PROSITE" id="PS01127">
    <property type="entry name" value="EF_TS_2"/>
    <property type="match status" value="1"/>
</dbReference>